<reference key="1">
    <citation type="journal article" date="2005" name="Nat. Biotechnol.">
        <title>Complete genome sequence of the plant commensal Pseudomonas fluorescens Pf-5.</title>
        <authorList>
            <person name="Paulsen I.T."/>
            <person name="Press C.M."/>
            <person name="Ravel J."/>
            <person name="Kobayashi D.Y."/>
            <person name="Myers G.S.A."/>
            <person name="Mavrodi D.V."/>
            <person name="DeBoy R.T."/>
            <person name="Seshadri R."/>
            <person name="Ren Q."/>
            <person name="Madupu R."/>
            <person name="Dodson R.J."/>
            <person name="Durkin A.S."/>
            <person name="Brinkac L.M."/>
            <person name="Daugherty S.C."/>
            <person name="Sullivan S.A."/>
            <person name="Rosovitz M.J."/>
            <person name="Gwinn M.L."/>
            <person name="Zhou L."/>
            <person name="Schneider D.J."/>
            <person name="Cartinhour S.W."/>
            <person name="Nelson W.C."/>
            <person name="Weidman J."/>
            <person name="Watkins K."/>
            <person name="Tran K."/>
            <person name="Khouri H."/>
            <person name="Pierson E.A."/>
            <person name="Pierson L.S. III"/>
            <person name="Thomashow L.S."/>
            <person name="Loper J.E."/>
        </authorList>
    </citation>
    <scope>NUCLEOTIDE SEQUENCE [LARGE SCALE GENOMIC DNA]</scope>
    <source>
        <strain>ATCC BAA-477 / NRRL B-23932 / Pf-5</strain>
    </source>
</reference>
<sequence length="247" mass="27517">MSKEPDRLFAQPLAQVPDFAFNEDVVRVFPDMIKRSVPGYPTIVENLGVLAAQFAQPNSVLYDLGSSLGAVTQALRRHVRTDGCRVIAVDNSAAMVERCREYLNGQDSMFQELLPVQVIEGDILALEFQPASVVALNFTLQFIAPEQRLALLGRIRQSLLPGGALILSEKLRFNDDQEHALLTDLHIAFKRANGYSELEIAQKRSAIENVMKPDSLEEHRERLLAAGFSKVVPWFQCLNFASLIALP</sequence>
<gene>
    <name evidence="1" type="primary">cmoA</name>
    <name type="ordered locus">PFL_4926</name>
</gene>
<keyword id="KW-0949">S-adenosyl-L-methionine</keyword>
<keyword id="KW-0808">Transferase</keyword>
<feature type="chain" id="PRO_0000314359" description="Carboxy-S-adenosyl-L-methionine synthase">
    <location>
        <begin position="1"/>
        <end position="247"/>
    </location>
</feature>
<feature type="binding site" evidence="1">
    <location>
        <position position="40"/>
    </location>
    <ligand>
        <name>S-adenosyl-L-methionine</name>
        <dbReference type="ChEBI" id="CHEBI:59789"/>
    </ligand>
</feature>
<feature type="binding site" evidence="1">
    <location>
        <begin position="65"/>
        <end position="67"/>
    </location>
    <ligand>
        <name>S-adenosyl-L-methionine</name>
        <dbReference type="ChEBI" id="CHEBI:59789"/>
    </ligand>
</feature>
<feature type="binding site" evidence="1">
    <location>
        <begin position="90"/>
        <end position="91"/>
    </location>
    <ligand>
        <name>S-adenosyl-L-methionine</name>
        <dbReference type="ChEBI" id="CHEBI:59789"/>
    </ligand>
</feature>
<feature type="binding site" evidence="1">
    <location>
        <begin position="122"/>
        <end position="123"/>
    </location>
    <ligand>
        <name>S-adenosyl-L-methionine</name>
        <dbReference type="ChEBI" id="CHEBI:59789"/>
    </ligand>
</feature>
<feature type="binding site" evidence="1">
    <location>
        <position position="137"/>
    </location>
    <ligand>
        <name>S-adenosyl-L-methionine</name>
        <dbReference type="ChEBI" id="CHEBI:59789"/>
    </ligand>
</feature>
<feature type="binding site" evidence="1">
    <location>
        <position position="204"/>
    </location>
    <ligand>
        <name>S-adenosyl-L-methionine</name>
        <dbReference type="ChEBI" id="CHEBI:59789"/>
    </ligand>
</feature>
<protein>
    <recommendedName>
        <fullName evidence="1">Carboxy-S-adenosyl-L-methionine synthase</fullName>
        <shortName evidence="1">Cx-SAM synthase</shortName>
        <ecNumber evidence="1">2.1.3.-</ecNumber>
    </recommendedName>
</protein>
<accession>Q4K6X7</accession>
<name>CMOA_PSEF5</name>
<comment type="function">
    <text evidence="1">Catalyzes the conversion of S-adenosyl-L-methionine (SAM) to carboxy-S-adenosyl-L-methionine (Cx-SAM).</text>
</comment>
<comment type="catalytic activity">
    <reaction evidence="1">
        <text>prephenate + S-adenosyl-L-methionine = carboxy-S-adenosyl-L-methionine + 3-phenylpyruvate + H2O</text>
        <dbReference type="Rhea" id="RHEA:51692"/>
        <dbReference type="ChEBI" id="CHEBI:15377"/>
        <dbReference type="ChEBI" id="CHEBI:18005"/>
        <dbReference type="ChEBI" id="CHEBI:29934"/>
        <dbReference type="ChEBI" id="CHEBI:59789"/>
        <dbReference type="ChEBI" id="CHEBI:134278"/>
    </reaction>
</comment>
<comment type="subunit">
    <text evidence="1">Homodimer.</text>
</comment>
<comment type="similarity">
    <text evidence="1">Belongs to the class I-like SAM-binding methyltransferase superfamily. Cx-SAM synthase family.</text>
</comment>
<evidence type="ECO:0000255" key="1">
    <source>
        <dbReference type="HAMAP-Rule" id="MF_01589"/>
    </source>
</evidence>
<proteinExistence type="inferred from homology"/>
<organism>
    <name type="scientific">Pseudomonas fluorescens (strain ATCC BAA-477 / NRRL B-23932 / Pf-5)</name>
    <dbReference type="NCBI Taxonomy" id="220664"/>
    <lineage>
        <taxon>Bacteria</taxon>
        <taxon>Pseudomonadati</taxon>
        <taxon>Pseudomonadota</taxon>
        <taxon>Gammaproteobacteria</taxon>
        <taxon>Pseudomonadales</taxon>
        <taxon>Pseudomonadaceae</taxon>
        <taxon>Pseudomonas</taxon>
    </lineage>
</organism>
<dbReference type="EC" id="2.1.3.-" evidence="1"/>
<dbReference type="EMBL" id="CP000076">
    <property type="protein sequence ID" value="AAY94155.1"/>
    <property type="molecule type" value="Genomic_DNA"/>
</dbReference>
<dbReference type="RefSeq" id="WP_011063179.1">
    <property type="nucleotide sequence ID" value="NC_004129.6"/>
</dbReference>
<dbReference type="SMR" id="Q4K6X7"/>
<dbReference type="STRING" id="220664.PFL_4926"/>
<dbReference type="GeneID" id="57477906"/>
<dbReference type="KEGG" id="pfl:PFL_4926"/>
<dbReference type="PATRIC" id="fig|220664.5.peg.5046"/>
<dbReference type="eggNOG" id="COG2226">
    <property type="taxonomic scope" value="Bacteria"/>
</dbReference>
<dbReference type="HOGENOM" id="CLU_078475_0_0_6"/>
<dbReference type="Proteomes" id="UP000008540">
    <property type="component" value="Chromosome"/>
</dbReference>
<dbReference type="GO" id="GO:0016743">
    <property type="term" value="F:carboxyl- or carbamoyltransferase activity"/>
    <property type="evidence" value="ECO:0007669"/>
    <property type="project" value="UniProtKB-UniRule"/>
</dbReference>
<dbReference type="GO" id="GO:1904047">
    <property type="term" value="F:S-adenosyl-L-methionine binding"/>
    <property type="evidence" value="ECO:0007669"/>
    <property type="project" value="UniProtKB-UniRule"/>
</dbReference>
<dbReference type="GO" id="GO:0002098">
    <property type="term" value="P:tRNA wobble uridine modification"/>
    <property type="evidence" value="ECO:0007669"/>
    <property type="project" value="InterPro"/>
</dbReference>
<dbReference type="CDD" id="cd02440">
    <property type="entry name" value="AdoMet_MTases"/>
    <property type="match status" value="1"/>
</dbReference>
<dbReference type="Gene3D" id="3.40.50.150">
    <property type="entry name" value="Vaccinia Virus protein VP39"/>
    <property type="match status" value="1"/>
</dbReference>
<dbReference type="HAMAP" id="MF_01589">
    <property type="entry name" value="Cx_SAM_synthase"/>
    <property type="match status" value="1"/>
</dbReference>
<dbReference type="InterPro" id="IPR005271">
    <property type="entry name" value="CmoA"/>
</dbReference>
<dbReference type="InterPro" id="IPR041698">
    <property type="entry name" value="Methyltransf_25"/>
</dbReference>
<dbReference type="InterPro" id="IPR029063">
    <property type="entry name" value="SAM-dependent_MTases_sf"/>
</dbReference>
<dbReference type="NCBIfam" id="TIGR00740">
    <property type="entry name" value="carboxy-S-adenosyl-L-methionine synthase CmoA"/>
    <property type="match status" value="1"/>
</dbReference>
<dbReference type="NCBIfam" id="NF011995">
    <property type="entry name" value="PRK15451.1"/>
    <property type="match status" value="1"/>
</dbReference>
<dbReference type="PANTHER" id="PTHR43861:SF2">
    <property type="entry name" value="CARBOXY-S-ADENOSYL-L-METHIONINE SYNTHASE"/>
    <property type="match status" value="1"/>
</dbReference>
<dbReference type="PANTHER" id="PTHR43861">
    <property type="entry name" value="TRANS-ACONITATE 2-METHYLTRANSFERASE-RELATED"/>
    <property type="match status" value="1"/>
</dbReference>
<dbReference type="Pfam" id="PF13649">
    <property type="entry name" value="Methyltransf_25"/>
    <property type="match status" value="1"/>
</dbReference>
<dbReference type="PIRSF" id="PIRSF006325">
    <property type="entry name" value="MeTrfase_bac"/>
    <property type="match status" value="1"/>
</dbReference>
<dbReference type="SUPFAM" id="SSF53335">
    <property type="entry name" value="S-adenosyl-L-methionine-dependent methyltransferases"/>
    <property type="match status" value="1"/>
</dbReference>